<organism>
    <name type="scientific">Oryza sativa subsp. japonica</name>
    <name type="common">Rice</name>
    <dbReference type="NCBI Taxonomy" id="39947"/>
    <lineage>
        <taxon>Eukaryota</taxon>
        <taxon>Viridiplantae</taxon>
        <taxon>Streptophyta</taxon>
        <taxon>Embryophyta</taxon>
        <taxon>Tracheophyta</taxon>
        <taxon>Spermatophyta</taxon>
        <taxon>Magnoliopsida</taxon>
        <taxon>Liliopsida</taxon>
        <taxon>Poales</taxon>
        <taxon>Poaceae</taxon>
        <taxon>BOP clade</taxon>
        <taxon>Oryzoideae</taxon>
        <taxon>Oryzeae</taxon>
        <taxon>Oryzinae</taxon>
        <taxon>Oryza</taxon>
        <taxon>Oryza sativa</taxon>
    </lineage>
</organism>
<keyword id="KW-0150">Chloroplast</keyword>
<keyword id="KW-0201">Cytochrome c-type biogenesis</keyword>
<keyword id="KW-0249">Electron transport</keyword>
<keyword id="KW-0472">Membrane</keyword>
<keyword id="KW-0934">Plastid</keyword>
<keyword id="KW-1185">Reference proteome</keyword>
<keyword id="KW-0793">Thylakoid</keyword>
<keyword id="KW-0809">Transit peptide</keyword>
<keyword id="KW-0812">Transmembrane</keyword>
<keyword id="KW-1133">Transmembrane helix</keyword>
<keyword id="KW-0813">Transport</keyword>
<comment type="function">
    <text evidence="1">Probably involved in the transfer of reducing equivalents from stroma to thylakoid lumen and required for the biogenesis of the plastid cytochrome b6f complex.</text>
</comment>
<comment type="subcellular location">
    <subcellularLocation>
        <location evidence="1">Plastid</location>
        <location evidence="1">Chloroplast thylakoid membrane</location>
        <topology>Multi-pass membrane protein</topology>
    </subcellularLocation>
</comment>
<comment type="similarity">
    <text evidence="4">Belongs to the DsbD family.</text>
</comment>
<comment type="sequence caution" evidence="4">
    <conflict type="erroneous gene model prediction">
        <sequence resource="EMBL-CDS" id="BAF27558"/>
    </conflict>
</comment>
<comment type="sequence caution" evidence="4">
    <conflict type="erroneous initiation">
        <sequence resource="EMBL-CDS" id="EEE51628"/>
    </conflict>
    <text>Truncated N-terminus.</text>
</comment>
<protein>
    <recommendedName>
        <fullName>Cytochrome c-type biogenesis ccda-like chloroplastic protein 1</fullName>
    </recommendedName>
    <alternativeName>
        <fullName>Cytochrome b6f biogenesis protein CCDA1</fullName>
    </alternativeName>
</protein>
<proteinExistence type="evidence at transcript level"/>
<reference key="1">
    <citation type="journal article" date="2005" name="BMC Biol.">
        <title>The sequence of rice chromosomes 11 and 12, rich in disease resistance genes and recent gene duplications.</title>
        <authorList>
            <consortium name="The rice chromosomes 11 and 12 sequencing consortia"/>
        </authorList>
    </citation>
    <scope>NUCLEOTIDE SEQUENCE [LARGE SCALE GENOMIC DNA]</scope>
    <source>
        <strain>cv. Nipponbare</strain>
    </source>
</reference>
<reference key="2">
    <citation type="journal article" date="2005" name="Nature">
        <title>The map-based sequence of the rice genome.</title>
        <authorList>
            <consortium name="International rice genome sequencing project (IRGSP)"/>
        </authorList>
    </citation>
    <scope>NUCLEOTIDE SEQUENCE [LARGE SCALE GENOMIC DNA]</scope>
    <source>
        <strain>cv. Nipponbare</strain>
    </source>
</reference>
<reference key="3">
    <citation type="journal article" date="2008" name="Nucleic Acids Res.">
        <title>The rice annotation project database (RAP-DB): 2008 update.</title>
        <authorList>
            <consortium name="The rice annotation project (RAP)"/>
        </authorList>
    </citation>
    <scope>GENOME REANNOTATION</scope>
    <source>
        <strain>cv. Nipponbare</strain>
    </source>
</reference>
<reference key="4">
    <citation type="journal article" date="2013" name="Rice">
        <title>Improvement of the Oryza sativa Nipponbare reference genome using next generation sequence and optical map data.</title>
        <authorList>
            <person name="Kawahara Y."/>
            <person name="de la Bastide M."/>
            <person name="Hamilton J.P."/>
            <person name="Kanamori H."/>
            <person name="McCombie W.R."/>
            <person name="Ouyang S."/>
            <person name="Schwartz D.C."/>
            <person name="Tanaka T."/>
            <person name="Wu J."/>
            <person name="Zhou S."/>
            <person name="Childs K.L."/>
            <person name="Davidson R.M."/>
            <person name="Lin H."/>
            <person name="Quesada-Ocampo L."/>
            <person name="Vaillancourt B."/>
            <person name="Sakai H."/>
            <person name="Lee S.S."/>
            <person name="Kim J."/>
            <person name="Numa H."/>
            <person name="Itoh T."/>
            <person name="Buell C.R."/>
            <person name="Matsumoto T."/>
        </authorList>
    </citation>
    <scope>GENOME REANNOTATION</scope>
    <source>
        <strain>cv. Nipponbare</strain>
    </source>
</reference>
<reference key="5">
    <citation type="journal article" date="2005" name="PLoS Biol.">
        <title>The genomes of Oryza sativa: a history of duplications.</title>
        <authorList>
            <person name="Yu J."/>
            <person name="Wang J."/>
            <person name="Lin W."/>
            <person name="Li S."/>
            <person name="Li H."/>
            <person name="Zhou J."/>
            <person name="Ni P."/>
            <person name="Dong W."/>
            <person name="Hu S."/>
            <person name="Zeng C."/>
            <person name="Zhang J."/>
            <person name="Zhang Y."/>
            <person name="Li R."/>
            <person name="Xu Z."/>
            <person name="Li S."/>
            <person name="Li X."/>
            <person name="Zheng H."/>
            <person name="Cong L."/>
            <person name="Lin L."/>
            <person name="Yin J."/>
            <person name="Geng J."/>
            <person name="Li G."/>
            <person name="Shi J."/>
            <person name="Liu J."/>
            <person name="Lv H."/>
            <person name="Li J."/>
            <person name="Wang J."/>
            <person name="Deng Y."/>
            <person name="Ran L."/>
            <person name="Shi X."/>
            <person name="Wang X."/>
            <person name="Wu Q."/>
            <person name="Li C."/>
            <person name="Ren X."/>
            <person name="Wang J."/>
            <person name="Wang X."/>
            <person name="Li D."/>
            <person name="Liu D."/>
            <person name="Zhang X."/>
            <person name="Ji Z."/>
            <person name="Zhao W."/>
            <person name="Sun Y."/>
            <person name="Zhang Z."/>
            <person name="Bao J."/>
            <person name="Han Y."/>
            <person name="Dong L."/>
            <person name="Ji J."/>
            <person name="Chen P."/>
            <person name="Wu S."/>
            <person name="Liu J."/>
            <person name="Xiao Y."/>
            <person name="Bu D."/>
            <person name="Tan J."/>
            <person name="Yang L."/>
            <person name="Ye C."/>
            <person name="Zhang J."/>
            <person name="Xu J."/>
            <person name="Zhou Y."/>
            <person name="Yu Y."/>
            <person name="Zhang B."/>
            <person name="Zhuang S."/>
            <person name="Wei H."/>
            <person name="Liu B."/>
            <person name="Lei M."/>
            <person name="Yu H."/>
            <person name="Li Y."/>
            <person name="Xu H."/>
            <person name="Wei S."/>
            <person name="He X."/>
            <person name="Fang L."/>
            <person name="Zhang Z."/>
            <person name="Zhang Y."/>
            <person name="Huang X."/>
            <person name="Su Z."/>
            <person name="Tong W."/>
            <person name="Li J."/>
            <person name="Tong Z."/>
            <person name="Li S."/>
            <person name="Ye J."/>
            <person name="Wang L."/>
            <person name="Fang L."/>
            <person name="Lei T."/>
            <person name="Chen C.-S."/>
            <person name="Chen H.-C."/>
            <person name="Xu Z."/>
            <person name="Li H."/>
            <person name="Huang H."/>
            <person name="Zhang F."/>
            <person name="Xu H."/>
            <person name="Li N."/>
            <person name="Zhao C."/>
            <person name="Li S."/>
            <person name="Dong L."/>
            <person name="Huang Y."/>
            <person name="Li L."/>
            <person name="Xi Y."/>
            <person name="Qi Q."/>
            <person name="Li W."/>
            <person name="Zhang B."/>
            <person name="Hu W."/>
            <person name="Zhang Y."/>
            <person name="Tian X."/>
            <person name="Jiao Y."/>
            <person name="Liang X."/>
            <person name="Jin J."/>
            <person name="Gao L."/>
            <person name="Zheng W."/>
            <person name="Hao B."/>
            <person name="Liu S.-M."/>
            <person name="Wang W."/>
            <person name="Yuan L."/>
            <person name="Cao M."/>
            <person name="McDermott J."/>
            <person name="Samudrala R."/>
            <person name="Wang J."/>
            <person name="Wong G.K.-S."/>
            <person name="Yang H."/>
        </authorList>
    </citation>
    <scope>NUCLEOTIDE SEQUENCE [LARGE SCALE GENOMIC DNA]</scope>
    <source>
        <strain>cv. Nipponbare</strain>
    </source>
</reference>
<reference key="6">
    <citation type="submission" date="2006-10" db="EMBL/GenBank/DDBJ databases">
        <title>Oryza sativa full length cDNA.</title>
        <authorList>
            <consortium name="The rice full-length cDNA consortium"/>
        </authorList>
    </citation>
    <scope>NUCLEOTIDE SEQUENCE [LARGE SCALE MRNA]</scope>
    <source>
        <strain>cv. Nipponbare</strain>
    </source>
</reference>
<feature type="transit peptide" description="Chloroplast" evidence="2">
    <location>
        <begin position="1"/>
        <end position="68"/>
    </location>
</feature>
<feature type="chain" id="PRO_0000394853" description="Cytochrome c-type biogenesis ccda-like chloroplastic protein 1">
    <location>
        <begin position="69"/>
        <end position="367"/>
    </location>
</feature>
<feature type="transmembrane region" description="Helical" evidence="2">
    <location>
        <begin position="76"/>
        <end position="96"/>
    </location>
</feature>
<feature type="transmembrane region" description="Helical" evidence="2">
    <location>
        <begin position="102"/>
        <end position="122"/>
    </location>
</feature>
<feature type="transmembrane region" description="Helical" evidence="2">
    <location>
        <begin position="148"/>
        <end position="170"/>
    </location>
</feature>
<feature type="transmembrane region" description="Helical" evidence="2">
    <location>
        <begin position="190"/>
        <end position="210"/>
    </location>
</feature>
<feature type="transmembrane region" description="Helical" evidence="2">
    <location>
        <begin position="220"/>
        <end position="240"/>
    </location>
</feature>
<feature type="transmembrane region" description="Helical" evidence="2">
    <location>
        <begin position="273"/>
        <end position="293"/>
    </location>
</feature>
<feature type="transmembrane region" description="Helical" evidence="2">
    <location>
        <begin position="299"/>
        <end position="319"/>
    </location>
</feature>
<feature type="transmembrane region" description="Helical" evidence="2">
    <location>
        <begin position="336"/>
        <end position="356"/>
    </location>
</feature>
<feature type="region of interest" description="Disordered" evidence="3">
    <location>
        <begin position="24"/>
        <end position="45"/>
    </location>
</feature>
<feature type="compositionally biased region" description="Low complexity" evidence="3">
    <location>
        <begin position="26"/>
        <end position="45"/>
    </location>
</feature>
<sequence>MLCVAMAARPVSSTTSTCRPCLPAQVSASKPSTSSSPGTGVLVGVPRERGSSVSKAAIRGARLEAAARCSLVRQRPMLLATVAVGSLVAAGAANATEIGDSLLGSSGLALADLSVGDWFGNLLYSAGQQANEAVQDQLSALSFTSLAVIFGAGLVTSLSPCTLSVLPLTLGYIGAFGSGKDRSEVVGNSVAFSLGLATTLAILGVAASFAGKAYGQVGQGLPVAASGLAVIMGLNLLEVIELQLPSFFSDYDPRAAAANLPSSVQAYLAGLTFALAASPCSTPVLATLLGYVATSRDPIVGGSLLLTYTTGYVAPLLIAASFAGALQSLLSFRRYSAWINPISGAFLLGGGVYTLLDRLFPATSMVM</sequence>
<dbReference type="EMBL" id="DP000010">
    <property type="protein sequence ID" value="ABA91416.1"/>
    <property type="molecule type" value="Genomic_DNA"/>
</dbReference>
<dbReference type="EMBL" id="AP008217">
    <property type="protein sequence ID" value="BAF27558.2"/>
    <property type="status" value="ALT_SEQ"/>
    <property type="molecule type" value="Genomic_DNA"/>
</dbReference>
<dbReference type="EMBL" id="AP014967">
    <property type="protein sequence ID" value="BAT12612.1"/>
    <property type="molecule type" value="Genomic_DNA"/>
</dbReference>
<dbReference type="EMBL" id="CM000148">
    <property type="protein sequence ID" value="EEE51628.1"/>
    <property type="status" value="ALT_INIT"/>
    <property type="molecule type" value="Genomic_DNA"/>
</dbReference>
<dbReference type="EMBL" id="AK242328">
    <property type="protein sequence ID" value="BAH01263.1"/>
    <property type="molecule type" value="mRNA"/>
</dbReference>
<dbReference type="RefSeq" id="XP_015617329.1">
    <property type="nucleotide sequence ID" value="XM_015761843.1"/>
</dbReference>
<dbReference type="FunCoup" id="Q2RAR6">
    <property type="interactions" value="123"/>
</dbReference>
<dbReference type="STRING" id="39947.Q2RAR6"/>
<dbReference type="PaxDb" id="39947-Q2RAR6"/>
<dbReference type="EnsemblPlants" id="Os11t0140800-01">
    <property type="protein sequence ID" value="Os11t0140800-01"/>
    <property type="gene ID" value="Os11g0140800"/>
</dbReference>
<dbReference type="Gramene" id="Os11t0140800-01">
    <property type="protein sequence ID" value="Os11t0140800-01"/>
    <property type="gene ID" value="Os11g0140800"/>
</dbReference>
<dbReference type="KEGG" id="dosa:Os11g0140800"/>
<dbReference type="eggNOG" id="ENOG502QR2K">
    <property type="taxonomic scope" value="Eukaryota"/>
</dbReference>
<dbReference type="HOGENOM" id="CLU_053225_0_0_1"/>
<dbReference type="InParanoid" id="Q2RAR6"/>
<dbReference type="OMA" id="LRQYSAW"/>
<dbReference type="OrthoDB" id="40974at2759"/>
<dbReference type="Proteomes" id="UP000000763">
    <property type="component" value="Chromosome 11"/>
</dbReference>
<dbReference type="Proteomes" id="UP000007752">
    <property type="component" value="Chromosome 11"/>
</dbReference>
<dbReference type="Proteomes" id="UP000059680">
    <property type="component" value="Chromosome 11"/>
</dbReference>
<dbReference type="GO" id="GO:0009535">
    <property type="term" value="C:chloroplast thylakoid membrane"/>
    <property type="evidence" value="ECO:0007669"/>
    <property type="project" value="UniProtKB-SubCell"/>
</dbReference>
<dbReference type="GO" id="GO:0017004">
    <property type="term" value="P:cytochrome complex assembly"/>
    <property type="evidence" value="ECO:0007669"/>
    <property type="project" value="UniProtKB-KW"/>
</dbReference>
<dbReference type="InterPro" id="IPR003834">
    <property type="entry name" value="Cyt_c_assmbl_TM_dom"/>
</dbReference>
<dbReference type="InterPro" id="IPR051790">
    <property type="entry name" value="Cytochrome_c-biogenesis_DsbD"/>
</dbReference>
<dbReference type="PANTHER" id="PTHR31272:SF6">
    <property type="entry name" value="CYTOCHROME C-TYPE BIOGENESIS CCDA-LIKE CHLOROPLASTIC PROTEIN"/>
    <property type="match status" value="1"/>
</dbReference>
<dbReference type="PANTHER" id="PTHR31272">
    <property type="entry name" value="CYTOCHROME C-TYPE BIOGENESIS PROTEIN HI_1454-RELATED"/>
    <property type="match status" value="1"/>
</dbReference>
<dbReference type="Pfam" id="PF02683">
    <property type="entry name" value="DsbD_TM"/>
    <property type="match status" value="1"/>
</dbReference>
<name>CCDA1_ORYSJ</name>
<accession>Q2RAR6</accession>
<accession>A0A0P0XYL2</accession>
<accession>B9G9C2</accession>
<accession>Q0IUQ7</accession>
<evidence type="ECO:0000250" key="1"/>
<evidence type="ECO:0000255" key="2"/>
<evidence type="ECO:0000256" key="3">
    <source>
        <dbReference type="SAM" id="MobiDB-lite"/>
    </source>
</evidence>
<evidence type="ECO:0000305" key="4"/>
<gene>
    <name type="primary">CCDA1</name>
    <name type="ordered locus">Os11g0140800</name>
    <name type="ordered locus">LOC_Os11g04500</name>
    <name type="ORF">OsJ_32910</name>
</gene>